<gene>
    <name type="primary">Hax1</name>
    <name type="synonym">Hs1bp1</name>
</gene>
<organism>
    <name type="scientific">Mus musculus</name>
    <name type="common">Mouse</name>
    <dbReference type="NCBI Taxonomy" id="10090"/>
    <lineage>
        <taxon>Eukaryota</taxon>
        <taxon>Metazoa</taxon>
        <taxon>Chordata</taxon>
        <taxon>Craniata</taxon>
        <taxon>Vertebrata</taxon>
        <taxon>Euteleostomi</taxon>
        <taxon>Mammalia</taxon>
        <taxon>Eutheria</taxon>
        <taxon>Euarchontoglires</taxon>
        <taxon>Glires</taxon>
        <taxon>Rodentia</taxon>
        <taxon>Myomorpha</taxon>
        <taxon>Muroidea</taxon>
        <taxon>Muridae</taxon>
        <taxon>Murinae</taxon>
        <taxon>Mus</taxon>
        <taxon>Mus</taxon>
    </lineage>
</organism>
<dbReference type="EMBL" id="AF023482">
    <property type="protein sequence ID" value="AAB81081.1"/>
    <property type="molecule type" value="mRNA"/>
</dbReference>
<dbReference type="EMBL" id="AK002256">
    <property type="protein sequence ID" value="BAB21969.1"/>
    <property type="molecule type" value="mRNA"/>
</dbReference>
<dbReference type="EMBL" id="AK010633">
    <property type="protein sequence ID" value="BAB27077.1"/>
    <property type="molecule type" value="mRNA"/>
</dbReference>
<dbReference type="EMBL" id="AK088746">
    <property type="protein sequence ID" value="BAC40544.1"/>
    <property type="molecule type" value="mRNA"/>
</dbReference>
<dbReference type="EMBL" id="BC006688">
    <property type="protein sequence ID" value="AAH06688.1"/>
    <property type="molecule type" value="mRNA"/>
</dbReference>
<dbReference type="EMBL" id="BC098225">
    <property type="protein sequence ID" value="AAH98225.1"/>
    <property type="molecule type" value="mRNA"/>
</dbReference>
<dbReference type="CCDS" id="CCDS17519.1"/>
<dbReference type="RefSeq" id="NP_035956.1">
    <property type="nucleotide sequence ID" value="NM_011826.5"/>
</dbReference>
<dbReference type="SMR" id="O35387"/>
<dbReference type="BioGRID" id="204783">
    <property type="interactions" value="19"/>
</dbReference>
<dbReference type="CORUM" id="O35387"/>
<dbReference type="DIP" id="DIP-49445N"/>
<dbReference type="FunCoup" id="O35387">
    <property type="interactions" value="921"/>
</dbReference>
<dbReference type="IntAct" id="O35387">
    <property type="interactions" value="22"/>
</dbReference>
<dbReference type="MINT" id="O35387"/>
<dbReference type="STRING" id="10090.ENSMUSP00000078661"/>
<dbReference type="iPTMnet" id="O35387"/>
<dbReference type="PhosphoSitePlus" id="O35387"/>
<dbReference type="jPOST" id="O35387"/>
<dbReference type="PaxDb" id="10090-ENSMUSP00000078661"/>
<dbReference type="ProteomicsDB" id="269814"/>
<dbReference type="Pumba" id="O35387"/>
<dbReference type="Antibodypedia" id="34150">
    <property type="antibodies" value="501 antibodies from 37 providers"/>
</dbReference>
<dbReference type="DNASU" id="23897"/>
<dbReference type="Ensembl" id="ENSMUST00000079724.9">
    <property type="protein sequence ID" value="ENSMUSP00000078661.5"/>
    <property type="gene ID" value="ENSMUSG00000027944.14"/>
</dbReference>
<dbReference type="GeneID" id="23897"/>
<dbReference type="KEGG" id="mmu:23897"/>
<dbReference type="UCSC" id="uc008qaj.2">
    <property type="organism name" value="mouse"/>
</dbReference>
<dbReference type="AGR" id="MGI:1346319"/>
<dbReference type="CTD" id="10456"/>
<dbReference type="MGI" id="MGI:1346319">
    <property type="gene designation" value="Hax1"/>
</dbReference>
<dbReference type="VEuPathDB" id="HostDB:ENSMUSG00000027944"/>
<dbReference type="eggNOG" id="ENOG502S0AE">
    <property type="taxonomic scope" value="Eukaryota"/>
</dbReference>
<dbReference type="GeneTree" id="ENSGT00390000018324"/>
<dbReference type="InParanoid" id="O35387"/>
<dbReference type="OMA" id="SKFNDIW"/>
<dbReference type="OrthoDB" id="5562606at2759"/>
<dbReference type="PhylomeDB" id="O35387"/>
<dbReference type="TreeFam" id="TF328619"/>
<dbReference type="BioGRID-ORCS" id="23897">
    <property type="hits" value="3 hits in 76 CRISPR screens"/>
</dbReference>
<dbReference type="CD-CODE" id="CE726F99">
    <property type="entry name" value="Postsynaptic density"/>
</dbReference>
<dbReference type="ChiTaRS" id="Hax1">
    <property type="organism name" value="mouse"/>
</dbReference>
<dbReference type="PRO" id="PR:O35387"/>
<dbReference type="Proteomes" id="UP000000589">
    <property type="component" value="Chromosome 3"/>
</dbReference>
<dbReference type="RNAct" id="O35387">
    <property type="molecule type" value="protein"/>
</dbReference>
<dbReference type="Bgee" id="ENSMUSG00000027944">
    <property type="expression patterns" value="Expressed in blastoderm cell in morula and 69 other cell types or tissues"/>
</dbReference>
<dbReference type="ExpressionAtlas" id="O35387">
    <property type="expression patterns" value="baseline and differential"/>
</dbReference>
<dbReference type="GO" id="GO:0015629">
    <property type="term" value="C:actin cytoskeleton"/>
    <property type="evidence" value="ECO:0000314"/>
    <property type="project" value="BHF-UCL"/>
</dbReference>
<dbReference type="GO" id="GO:0016324">
    <property type="term" value="C:apical plasma membrane"/>
    <property type="evidence" value="ECO:0007669"/>
    <property type="project" value="Ensembl"/>
</dbReference>
<dbReference type="GO" id="GO:0005938">
    <property type="term" value="C:cell cortex"/>
    <property type="evidence" value="ECO:0007669"/>
    <property type="project" value="UniProtKB-SubCell"/>
</dbReference>
<dbReference type="GO" id="GO:0030136">
    <property type="term" value="C:clathrin-coated vesicle"/>
    <property type="evidence" value="ECO:0007669"/>
    <property type="project" value="Ensembl"/>
</dbReference>
<dbReference type="GO" id="GO:0005737">
    <property type="term" value="C:cytoplasm"/>
    <property type="evidence" value="ECO:0000314"/>
    <property type="project" value="BHF-UCL"/>
</dbReference>
<dbReference type="GO" id="GO:0005783">
    <property type="term" value="C:endoplasmic reticulum"/>
    <property type="evidence" value="ECO:0000314"/>
    <property type="project" value="BHF-UCL"/>
</dbReference>
<dbReference type="GO" id="GO:0030027">
    <property type="term" value="C:lamellipodium"/>
    <property type="evidence" value="ECO:0000314"/>
    <property type="project" value="BHF-UCL"/>
</dbReference>
<dbReference type="GO" id="GO:0005758">
    <property type="term" value="C:mitochondrial intermembrane space"/>
    <property type="evidence" value="ECO:0007669"/>
    <property type="project" value="Ensembl"/>
</dbReference>
<dbReference type="GO" id="GO:0005759">
    <property type="term" value="C:mitochondrial matrix"/>
    <property type="evidence" value="ECO:0000314"/>
    <property type="project" value="UniProtKB"/>
</dbReference>
<dbReference type="GO" id="GO:0005741">
    <property type="term" value="C:mitochondrial outer membrane"/>
    <property type="evidence" value="ECO:0007669"/>
    <property type="project" value="Ensembl"/>
</dbReference>
<dbReference type="GO" id="GO:0005739">
    <property type="term" value="C:mitochondrion"/>
    <property type="evidence" value="ECO:0000314"/>
    <property type="project" value="MGI"/>
</dbReference>
<dbReference type="GO" id="GO:0031965">
    <property type="term" value="C:nuclear membrane"/>
    <property type="evidence" value="ECO:0007669"/>
    <property type="project" value="UniProtKB-SubCell"/>
</dbReference>
<dbReference type="GO" id="GO:0000932">
    <property type="term" value="C:P-body"/>
    <property type="evidence" value="ECO:0007669"/>
    <property type="project" value="UniProtKB-SubCell"/>
</dbReference>
<dbReference type="GO" id="GO:0016529">
    <property type="term" value="C:sarcoplasmic reticulum"/>
    <property type="evidence" value="ECO:0000314"/>
    <property type="project" value="CACAO"/>
</dbReference>
<dbReference type="GO" id="GO:0005667">
    <property type="term" value="C:transcription regulator complex"/>
    <property type="evidence" value="ECO:0007669"/>
    <property type="project" value="Ensembl"/>
</dbReference>
<dbReference type="GO" id="GO:0019966">
    <property type="term" value="F:interleukin-1 binding"/>
    <property type="evidence" value="ECO:0007669"/>
    <property type="project" value="Ensembl"/>
</dbReference>
<dbReference type="GO" id="GO:0019904">
    <property type="term" value="F:protein domain specific binding"/>
    <property type="evidence" value="ECO:0007669"/>
    <property type="project" value="Ensembl"/>
</dbReference>
<dbReference type="GO" id="GO:0035591">
    <property type="term" value="F:signaling adaptor activity"/>
    <property type="evidence" value="ECO:0007669"/>
    <property type="project" value="Ensembl"/>
</dbReference>
<dbReference type="GO" id="GO:0007166">
    <property type="term" value="P:cell surface receptor signaling pathway"/>
    <property type="evidence" value="ECO:0000304"/>
    <property type="project" value="MGI"/>
</dbReference>
<dbReference type="GO" id="GO:0038158">
    <property type="term" value="P:granulocyte colony-stimulating factor signaling pathway"/>
    <property type="evidence" value="ECO:0007669"/>
    <property type="project" value="Ensembl"/>
</dbReference>
<dbReference type="GO" id="GO:0043066">
    <property type="term" value="P:negative regulation of apoptotic process"/>
    <property type="evidence" value="ECO:0007669"/>
    <property type="project" value="Ensembl"/>
</dbReference>
<dbReference type="GO" id="GO:0030854">
    <property type="term" value="P:positive regulation of granulocyte differentiation"/>
    <property type="evidence" value="ECO:0007669"/>
    <property type="project" value="Ensembl"/>
</dbReference>
<dbReference type="GO" id="GO:0051897">
    <property type="term" value="P:positive regulation of phosphatidylinositol 3-kinase/protein kinase B signal transduction"/>
    <property type="evidence" value="ECO:0007669"/>
    <property type="project" value="Ensembl"/>
</dbReference>
<dbReference type="GO" id="GO:0045944">
    <property type="term" value="P:positive regulation of transcription by RNA polymerase II"/>
    <property type="evidence" value="ECO:0007669"/>
    <property type="project" value="Ensembl"/>
</dbReference>
<dbReference type="GO" id="GO:0030833">
    <property type="term" value="P:regulation of actin filament polymerization"/>
    <property type="evidence" value="ECO:0007669"/>
    <property type="project" value="Ensembl"/>
</dbReference>
<dbReference type="InterPro" id="IPR017248">
    <property type="entry name" value="HAX-1"/>
</dbReference>
<dbReference type="PANTHER" id="PTHR14938">
    <property type="entry name" value="HCLS1-ASSOCIATED PROTEIN X-1"/>
    <property type="match status" value="1"/>
</dbReference>
<dbReference type="PANTHER" id="PTHR14938:SF2">
    <property type="entry name" value="HCLS1-ASSOCIATED PROTEIN X-1"/>
    <property type="match status" value="1"/>
</dbReference>
<dbReference type="PIRSF" id="PIRSF037634">
    <property type="entry name" value="HS1-associating_X-1"/>
    <property type="match status" value="1"/>
</dbReference>
<keyword id="KW-0007">Acetylation</keyword>
<keyword id="KW-1003">Cell membrane</keyword>
<keyword id="KW-0963">Cytoplasm</keyword>
<keyword id="KW-0968">Cytoplasmic vesicle</keyword>
<keyword id="KW-0256">Endoplasmic reticulum</keyword>
<keyword id="KW-0472">Membrane</keyword>
<keyword id="KW-0496">Mitochondrion</keyword>
<keyword id="KW-0539">Nucleus</keyword>
<keyword id="KW-0597">Phosphoprotein</keyword>
<keyword id="KW-1185">Reference proteome</keyword>
<keyword id="KW-0703">Sarcoplasmic reticulum</keyword>
<accession>O35387</accession>
<accession>Q542F8</accession>
<sequence>MSVFDLFRGFFGFPGPRSHRDPFFGGMTRDDDDDDDDDDEAEEDRGAWGRESYAFDGSQPPEEFGFSFSPRGGMRFHGNFGFDDLVRDFNSIFSEMGAWTLPSHSPELPGPESETPGERLREGQTLRDSMLKYPDSHQPRIFEGVLESHAKPESPKPAPDWGSQGPFHRLDDTWPVSPHSRAKEDKDLDSQVSQEGLGPLLQPQPKSYFKSISVTKITKPDGTVEERRTVVDSEGRRETTVTHQEAHDSSRSDPDSQRSSALDDPFSILDLLLGRWFRSR</sequence>
<protein>
    <recommendedName>
        <fullName>HCLS1-associated protein X-1</fullName>
    </recommendedName>
    <alternativeName>
        <fullName>HS1-associating protein X-1</fullName>
        <shortName>HAX-1</shortName>
    </alternativeName>
    <alternativeName>
        <fullName>HS1-binding protein 1</fullName>
        <shortName>HSP1BP-1</shortName>
    </alternativeName>
</protein>
<proteinExistence type="evidence at protein level"/>
<reference key="1">
    <citation type="submission" date="1997-09" db="EMBL/GenBank/DDBJ databases">
        <title>Mouse HAX-1 short form (HAX-1s).</title>
        <authorList>
            <person name="Watanabe T."/>
            <person name="Takeshita H."/>
        </authorList>
    </citation>
    <scope>NUCLEOTIDE SEQUENCE [MRNA]</scope>
</reference>
<reference key="2">
    <citation type="journal article" date="2005" name="Science">
        <title>The transcriptional landscape of the mammalian genome.</title>
        <authorList>
            <person name="Carninci P."/>
            <person name="Kasukawa T."/>
            <person name="Katayama S."/>
            <person name="Gough J."/>
            <person name="Frith M.C."/>
            <person name="Maeda N."/>
            <person name="Oyama R."/>
            <person name="Ravasi T."/>
            <person name="Lenhard B."/>
            <person name="Wells C."/>
            <person name="Kodzius R."/>
            <person name="Shimokawa K."/>
            <person name="Bajic V.B."/>
            <person name="Brenner S.E."/>
            <person name="Batalov S."/>
            <person name="Forrest A.R."/>
            <person name="Zavolan M."/>
            <person name="Davis M.J."/>
            <person name="Wilming L.G."/>
            <person name="Aidinis V."/>
            <person name="Allen J.E."/>
            <person name="Ambesi-Impiombato A."/>
            <person name="Apweiler R."/>
            <person name="Aturaliya R.N."/>
            <person name="Bailey T.L."/>
            <person name="Bansal M."/>
            <person name="Baxter L."/>
            <person name="Beisel K.W."/>
            <person name="Bersano T."/>
            <person name="Bono H."/>
            <person name="Chalk A.M."/>
            <person name="Chiu K.P."/>
            <person name="Choudhary V."/>
            <person name="Christoffels A."/>
            <person name="Clutterbuck D.R."/>
            <person name="Crowe M.L."/>
            <person name="Dalla E."/>
            <person name="Dalrymple B.P."/>
            <person name="de Bono B."/>
            <person name="Della Gatta G."/>
            <person name="di Bernardo D."/>
            <person name="Down T."/>
            <person name="Engstrom P."/>
            <person name="Fagiolini M."/>
            <person name="Faulkner G."/>
            <person name="Fletcher C.F."/>
            <person name="Fukushima T."/>
            <person name="Furuno M."/>
            <person name="Futaki S."/>
            <person name="Gariboldi M."/>
            <person name="Georgii-Hemming P."/>
            <person name="Gingeras T.R."/>
            <person name="Gojobori T."/>
            <person name="Green R.E."/>
            <person name="Gustincich S."/>
            <person name="Harbers M."/>
            <person name="Hayashi Y."/>
            <person name="Hensch T.K."/>
            <person name="Hirokawa N."/>
            <person name="Hill D."/>
            <person name="Huminiecki L."/>
            <person name="Iacono M."/>
            <person name="Ikeo K."/>
            <person name="Iwama A."/>
            <person name="Ishikawa T."/>
            <person name="Jakt M."/>
            <person name="Kanapin A."/>
            <person name="Katoh M."/>
            <person name="Kawasawa Y."/>
            <person name="Kelso J."/>
            <person name="Kitamura H."/>
            <person name="Kitano H."/>
            <person name="Kollias G."/>
            <person name="Krishnan S.P."/>
            <person name="Kruger A."/>
            <person name="Kummerfeld S.K."/>
            <person name="Kurochkin I.V."/>
            <person name="Lareau L.F."/>
            <person name="Lazarevic D."/>
            <person name="Lipovich L."/>
            <person name="Liu J."/>
            <person name="Liuni S."/>
            <person name="McWilliam S."/>
            <person name="Madan Babu M."/>
            <person name="Madera M."/>
            <person name="Marchionni L."/>
            <person name="Matsuda H."/>
            <person name="Matsuzawa S."/>
            <person name="Miki H."/>
            <person name="Mignone F."/>
            <person name="Miyake S."/>
            <person name="Morris K."/>
            <person name="Mottagui-Tabar S."/>
            <person name="Mulder N."/>
            <person name="Nakano N."/>
            <person name="Nakauchi H."/>
            <person name="Ng P."/>
            <person name="Nilsson R."/>
            <person name="Nishiguchi S."/>
            <person name="Nishikawa S."/>
            <person name="Nori F."/>
            <person name="Ohara O."/>
            <person name="Okazaki Y."/>
            <person name="Orlando V."/>
            <person name="Pang K.C."/>
            <person name="Pavan W.J."/>
            <person name="Pavesi G."/>
            <person name="Pesole G."/>
            <person name="Petrovsky N."/>
            <person name="Piazza S."/>
            <person name="Reed J."/>
            <person name="Reid J.F."/>
            <person name="Ring B.Z."/>
            <person name="Ringwald M."/>
            <person name="Rost B."/>
            <person name="Ruan Y."/>
            <person name="Salzberg S.L."/>
            <person name="Sandelin A."/>
            <person name="Schneider C."/>
            <person name="Schoenbach C."/>
            <person name="Sekiguchi K."/>
            <person name="Semple C.A."/>
            <person name="Seno S."/>
            <person name="Sessa L."/>
            <person name="Sheng Y."/>
            <person name="Shibata Y."/>
            <person name="Shimada H."/>
            <person name="Shimada K."/>
            <person name="Silva D."/>
            <person name="Sinclair B."/>
            <person name="Sperling S."/>
            <person name="Stupka E."/>
            <person name="Sugiura K."/>
            <person name="Sultana R."/>
            <person name="Takenaka Y."/>
            <person name="Taki K."/>
            <person name="Tammoja K."/>
            <person name="Tan S.L."/>
            <person name="Tang S."/>
            <person name="Taylor M.S."/>
            <person name="Tegner J."/>
            <person name="Teichmann S.A."/>
            <person name="Ueda H.R."/>
            <person name="van Nimwegen E."/>
            <person name="Verardo R."/>
            <person name="Wei C.L."/>
            <person name="Yagi K."/>
            <person name="Yamanishi H."/>
            <person name="Zabarovsky E."/>
            <person name="Zhu S."/>
            <person name="Zimmer A."/>
            <person name="Hide W."/>
            <person name="Bult C."/>
            <person name="Grimmond S.M."/>
            <person name="Teasdale R.D."/>
            <person name="Liu E.T."/>
            <person name="Brusic V."/>
            <person name="Quackenbush J."/>
            <person name="Wahlestedt C."/>
            <person name="Mattick J.S."/>
            <person name="Hume D.A."/>
            <person name="Kai C."/>
            <person name="Sasaki D."/>
            <person name="Tomaru Y."/>
            <person name="Fukuda S."/>
            <person name="Kanamori-Katayama M."/>
            <person name="Suzuki M."/>
            <person name="Aoki J."/>
            <person name="Arakawa T."/>
            <person name="Iida J."/>
            <person name="Imamura K."/>
            <person name="Itoh M."/>
            <person name="Kato T."/>
            <person name="Kawaji H."/>
            <person name="Kawagashira N."/>
            <person name="Kawashima T."/>
            <person name="Kojima M."/>
            <person name="Kondo S."/>
            <person name="Konno H."/>
            <person name="Nakano K."/>
            <person name="Ninomiya N."/>
            <person name="Nishio T."/>
            <person name="Okada M."/>
            <person name="Plessy C."/>
            <person name="Shibata K."/>
            <person name="Shiraki T."/>
            <person name="Suzuki S."/>
            <person name="Tagami M."/>
            <person name="Waki K."/>
            <person name="Watahiki A."/>
            <person name="Okamura-Oho Y."/>
            <person name="Suzuki H."/>
            <person name="Kawai J."/>
            <person name="Hayashizaki Y."/>
        </authorList>
    </citation>
    <scope>NUCLEOTIDE SEQUENCE [LARGE SCALE MRNA]</scope>
    <source>
        <strain>C57BL/6J</strain>
        <strain>NOD</strain>
        <tissue>Kidney</tissue>
        <tissue>Thymus</tissue>
    </source>
</reference>
<reference key="3">
    <citation type="journal article" date="2004" name="Genome Res.">
        <title>The status, quality, and expansion of the NIH full-length cDNA project: the Mammalian Gene Collection (MGC).</title>
        <authorList>
            <consortium name="The MGC Project Team"/>
        </authorList>
    </citation>
    <scope>NUCLEOTIDE SEQUENCE [LARGE SCALE MRNA]</scope>
    <source>
        <strain>FVB/N</strain>
        <tissue>Mammary gland</tissue>
    </source>
</reference>
<reference key="4">
    <citation type="journal article" date="2000" name="Proc. Natl. Acad. Sci. U.S.A.">
        <title>The polycystic kidney disease protein PKD2 interacts with Hax-1, a protein associated with the actin cytoskeleton.</title>
        <authorList>
            <person name="Gallagher A.R."/>
            <person name="Cedzich A."/>
            <person name="Gretz N."/>
            <person name="Somlo S."/>
            <person name="Witzgall R."/>
        </authorList>
    </citation>
    <scope>INTERACTION WITH PKD2 AND CTTN</scope>
    <scope>SUBCELLULAR LOCATION</scope>
</reference>
<reference key="5">
    <citation type="journal article" date="2006" name="Gene">
        <title>Expression and tissue distribution of mouse Hax1.</title>
        <authorList>
            <person name="Hippe A."/>
            <person name="Bylaite M."/>
            <person name="Chen M."/>
            <person name="von Mikecz A."/>
            <person name="Wolf R."/>
            <person name="Ruzicka T."/>
            <person name="Walz M."/>
        </authorList>
    </citation>
    <scope>SUBCELLULAR LOCATION</scope>
    <scope>TISSUE SPECIFICITY</scope>
</reference>
<reference key="6">
    <citation type="journal article" date="2008" name="Nature">
        <title>Hax1-mediated processing of HtrA2 by Parl allows survival of lymphocytes and neurons.</title>
        <authorList>
            <person name="Chao J.R."/>
            <person name="Parganas E."/>
            <person name="Boyd K."/>
            <person name="Hong C.Y."/>
            <person name="Opferman J.T."/>
            <person name="Ihle J.N."/>
        </authorList>
    </citation>
    <scope>DISRUPTION PHENOTYPE</scope>
</reference>
<reference key="7">
    <citation type="journal article" date="2010" name="Cell">
        <title>A tissue-specific atlas of mouse protein phosphorylation and expression.</title>
        <authorList>
            <person name="Huttlin E.L."/>
            <person name="Jedrychowski M.P."/>
            <person name="Elias J.E."/>
            <person name="Goswami T."/>
            <person name="Rad R."/>
            <person name="Beausoleil S.A."/>
            <person name="Villen J."/>
            <person name="Haas W."/>
            <person name="Sowa M.E."/>
            <person name="Gygi S.P."/>
        </authorList>
    </citation>
    <scope>IDENTIFICATION BY MASS SPECTROMETRY [LARGE SCALE ANALYSIS]</scope>
    <source>
        <tissue>Liver</tissue>
        <tissue>Spleen</tissue>
    </source>
</reference>
<reference key="8">
    <citation type="journal article" date="2016" name="Biochem. Biophys. Res. Commun.">
        <title>UCP3 is associated with Hax-1 in mitochondria in the presence of calcium ion.</title>
        <authorList>
            <person name="Hirasaka K."/>
            <person name="Mills E.M."/>
            <person name="Haruna M."/>
            <person name="Bando A."/>
            <person name="Ikeda C."/>
            <person name="Abe T."/>
            <person name="Kohno S."/>
            <person name="Nowinski S.M."/>
            <person name="Lago C.U."/>
            <person name="Akagi K."/>
            <person name="Tochio H."/>
            <person name="Ohno A."/>
            <person name="Teshima-Kondo S."/>
            <person name="Okumura Y."/>
            <person name="Nikawa T."/>
        </authorList>
    </citation>
    <scope>INTERACTION WITH UCP3</scope>
    <scope>SUBCELLULAR LOCATION</scope>
    <scope>REGION</scope>
</reference>
<reference key="9">
    <citation type="journal article" date="2016" name="Cell">
        <title>Kv3.3 channels bind Hax-1 and Arp2/3 to assemble a stable local actin network that regulates channel gating.</title>
        <authorList>
            <person name="Zhang Y."/>
            <person name="Zhang X.F."/>
            <person name="Fleming M.R."/>
            <person name="Amiri A."/>
            <person name="El-Hassar L."/>
            <person name="Surguchev A.A."/>
            <person name="Hyland C."/>
            <person name="Jenkins D.P."/>
            <person name="Desai R."/>
            <person name="Brown M.R."/>
            <person name="Gazula V.R."/>
            <person name="Waters M.F."/>
            <person name="Large C.H."/>
            <person name="Horvath T.L."/>
            <person name="Navaratnam D."/>
            <person name="Vaccarino F.M."/>
            <person name="Forscher P."/>
            <person name="Kaczmarek L.K."/>
        </authorList>
    </citation>
    <scope>INTERACTION WITH KCNC3</scope>
</reference>
<evidence type="ECO:0000250" key="1"/>
<evidence type="ECO:0000250" key="2">
    <source>
        <dbReference type="UniProtKB" id="O00165"/>
    </source>
</evidence>
<evidence type="ECO:0000250" key="3">
    <source>
        <dbReference type="UniProtKB" id="Q7TSE9"/>
    </source>
</evidence>
<evidence type="ECO:0000256" key="4">
    <source>
        <dbReference type="SAM" id="MobiDB-lite"/>
    </source>
</evidence>
<evidence type="ECO:0000269" key="5">
    <source>
    </source>
</evidence>
<evidence type="ECO:0000269" key="6">
    <source>
    </source>
</evidence>
<evidence type="ECO:0000269" key="7">
    <source>
    </source>
</evidence>
<evidence type="ECO:0000269" key="8">
    <source>
    </source>
</evidence>
<evidence type="ECO:0000305" key="9"/>
<evidence type="ECO:0000305" key="10">
    <source>
    </source>
</evidence>
<name>HAX1_MOUSE</name>
<comment type="function">
    <text evidence="2">Recruits the Arp2/3 complex to the cell cortex and regulates reorganization of the cortical actin cytoskeleton via its interaction with KCNC3 and the Arp2/3 complex. Slows down the rate of inactivation of KCNC3 channels. Promotes GNA13-mediated cell migration. Involved in the clathrin-mediated endocytosis pathway. May be involved in internalization of ABC transporters such as ABCB11. May inhibit CASP9 and CASP3. Promotes cell survival. May regulate intracellular calcium pools.</text>
</comment>
<comment type="subunit">
    <text evidence="2 3 5 8">Interacts with ABCB1, ABCB4 and ABCB11 (By similarity). Directly associates with HCLS1/HS1, through binding to its N-terminal region (By similarity). Interacts with CTTN (PubMed:10760273). Interacts with PKD2 (PubMed:10760273). Interacts with GNA13. Interacts with CASP9. Interacts with ITGB6. Interacts with PLN and ATP2A2; these interactions are inhibited by calcium. Interacts with GRB7. Interacts (via C-terminus) with XIAP/BIRC4 (via BIR 2 domain and BIR 3 domain) and this interaction blocks ubiquitination of XIAP/BIRC4. Interacts with TPC2. Interacts with KCNC3 (PubMed:26997484). Interacts with XPO1 (By similarity). Interacts with RNF217 (By similarity). Interacts with UCP3; the interaction is direct and calcium-dependent (PubMed:26915802). Interacts with MAPRE2; this interaction regulates cell migration in keratinocytes (By similarity).</text>
</comment>
<comment type="interaction">
    <interactant intactId="EBI-642449">
        <id>O35387</id>
    </interactant>
    <interactant intactId="EBI-641778">
        <id>Q8BWG8</id>
        <label>Arrb1</label>
    </interactant>
    <organismsDiffer>false</organismsDiffer>
    <experiments>6</experiments>
</comment>
<comment type="interaction">
    <interactant intactId="EBI-642449">
        <id>O35387</id>
    </interactant>
    <interactant intactId="EBI-2365838">
        <id>Q9JIY5</id>
        <label>Htra2</label>
    </interactant>
    <organismsDiffer>false</organismsDiffer>
    <experiments>3</experiments>
</comment>
<comment type="interaction">
    <interactant intactId="EBI-642449">
        <id>O35387</id>
    </interactant>
    <interactant intactId="EBI-5395457">
        <id>Q5XJY4</id>
        <label>Parl</label>
    </interactant>
    <organismsDiffer>false</organismsDiffer>
    <experiments>2</experiments>
</comment>
<comment type="interaction">
    <interactant intactId="EBI-642449">
        <id>O35387</id>
    </interactant>
    <interactant intactId="EBI-602878">
        <id>P42227</id>
        <label>Stat3</label>
    </interactant>
    <organismsDiffer>false</organismsDiffer>
    <experiments>11</experiments>
</comment>
<comment type="interaction">
    <interactant intactId="EBI-642449">
        <id>O35387</id>
    </interactant>
    <interactant intactId="EBI-7813714">
        <id>Q13563</id>
        <label>PKD2</label>
    </interactant>
    <organismsDiffer>true</organismsDiffer>
    <experiments>3</experiments>
</comment>
<comment type="subcellular location">
    <subcellularLocation>
        <location evidence="6 8">Mitochondrion matrix</location>
    </subcellularLocation>
    <subcellularLocation>
        <location evidence="5">Endoplasmic reticulum</location>
    </subcellularLocation>
    <subcellularLocation>
        <location evidence="10">Nucleus membrane</location>
    </subcellularLocation>
    <subcellularLocation>
        <location evidence="5 6">Cytoplasmic vesicle</location>
    </subcellularLocation>
    <subcellularLocation>
        <location evidence="2">Cytoplasm</location>
        <location evidence="2">Cell cortex</location>
    </subcellularLocation>
    <subcellularLocation>
        <location evidence="2">Cell membrane</location>
        <topology evidence="2">Peripheral membrane protein</topology>
        <orientation evidence="2">Cytoplasmic side</orientation>
    </subcellularLocation>
    <subcellularLocation>
        <location evidence="3">Sarcoplasmic reticulum</location>
    </subcellularLocation>
    <subcellularLocation>
        <location evidence="2">Cytoplasm</location>
        <location evidence="2">P-body</location>
    </subcellularLocation>
    <subcellularLocation>
        <location evidence="2">Cytoplasm</location>
    </subcellularLocation>
    <subcellularLocation>
        <location evidence="2">Nucleus</location>
    </subcellularLocation>
    <text evidence="2">Predominantly cytoplasmic. Also detected in the nucleus when nuclear export is inhibited (in vitro).</text>
</comment>
<comment type="tissue specificity">
    <text evidence="6">Ubiquitous, with highest levels in kidney and liver (at protein level).</text>
</comment>
<comment type="disruption phenotype">
    <text evidence="7">Mice lacking Hax1 fail to survive longer than 14 weeks, due to a loss of motor coordination and activity, leading to failure to eat and drink. They display extensive apoptosis of neurons in the striatum and cerebellum, and a loss of lymphocytes in spleen, bone marrow and thymus.</text>
</comment>
<comment type="similarity">
    <text evidence="9">Belongs to the HAX1 family.</text>
</comment>
<feature type="initiator methionine" description="Removed" evidence="2">
    <location>
        <position position="1"/>
    </location>
</feature>
<feature type="chain" id="PRO_0000083907" description="HCLS1-associated protein X-1">
    <location>
        <begin position="2"/>
        <end position="280"/>
    </location>
</feature>
<feature type="region of interest" description="Required for localization in mitochondria" evidence="1">
    <location>
        <begin position="2"/>
        <end position="45"/>
    </location>
</feature>
<feature type="region of interest" description="Disordered" evidence="4">
    <location>
        <begin position="12"/>
        <end position="70"/>
    </location>
</feature>
<feature type="region of interest" description="Disordered" evidence="4">
    <location>
        <begin position="100"/>
        <end position="263"/>
    </location>
</feature>
<feature type="region of interest" description="Involved in HCLS1 binding" evidence="1">
    <location>
        <begin position="115"/>
        <end position="280"/>
    </location>
</feature>
<feature type="region of interest" description="Involved in CASP9 binding" evidence="1">
    <location>
        <begin position="176"/>
        <end position="207"/>
    </location>
</feature>
<feature type="region of interest" description="Involved in GNA13 binding" evidence="1">
    <location>
        <begin position="177"/>
        <end position="248"/>
    </location>
</feature>
<feature type="region of interest" description="Required for localization in sarcoplasmic reticulum" evidence="1">
    <location>
        <begin position="184"/>
        <end position="280"/>
    </location>
</feature>
<feature type="region of interest" description="Involved in PKD2 binding">
    <location>
        <begin position="185"/>
        <end position="280"/>
    </location>
</feature>
<feature type="region of interest" description="Involved in ATP2A2 binding" evidence="1">
    <location>
        <begin position="204"/>
        <end position="246"/>
    </location>
</feature>
<feature type="region of interest" description="Involved in PLN binding" evidence="1">
    <location>
        <begin position="204"/>
        <end position="226"/>
    </location>
</feature>
<feature type="region of interest" description="Mediates interaction with UCP3" evidence="8">
    <location>
        <begin position="211"/>
        <end position="280"/>
    </location>
</feature>
<feature type="region of interest" description="Required for ITGB6 binding" evidence="1">
    <location>
        <begin position="271"/>
        <end position="280"/>
    </location>
</feature>
<feature type="compositionally biased region" description="Acidic residues" evidence="4">
    <location>
        <begin position="30"/>
        <end position="43"/>
    </location>
</feature>
<feature type="compositionally biased region" description="Basic and acidic residues" evidence="4">
    <location>
        <begin position="116"/>
        <end position="125"/>
    </location>
</feature>
<feature type="compositionally biased region" description="Basic and acidic residues" evidence="4">
    <location>
        <begin position="134"/>
        <end position="154"/>
    </location>
</feature>
<feature type="compositionally biased region" description="Basic and acidic residues" evidence="4">
    <location>
        <begin position="218"/>
        <end position="256"/>
    </location>
</feature>
<feature type="site" description="Cleavage; by caspase-3" evidence="1">
    <location>
        <begin position="128"/>
        <end position="129"/>
    </location>
</feature>
<feature type="modified residue" description="N-acetylserine" evidence="2">
    <location>
        <position position="2"/>
    </location>
</feature>
<feature type="modified residue" description="Phosphoserine" evidence="2">
    <location>
        <position position="190"/>
    </location>
</feature>
<feature type="modified residue" description="Phosphoserine" evidence="2">
    <location>
        <position position="193"/>
    </location>
</feature>